<dbReference type="EC" id="3.4.24.28"/>
<dbReference type="EMBL" id="X75070">
    <property type="protein sequence ID" value="CAA52964.1"/>
    <property type="molecule type" value="Genomic_DNA"/>
</dbReference>
<dbReference type="EMBL" id="CP001982">
    <property type="protein sequence ID" value="ADF39133.1"/>
    <property type="molecule type" value="Genomic_DNA"/>
</dbReference>
<dbReference type="PIR" id="I40227">
    <property type="entry name" value="I40227"/>
</dbReference>
<dbReference type="RefSeq" id="WP_013083132.1">
    <property type="nucleotide sequence ID" value="NZ_CP120609.1"/>
</dbReference>
<dbReference type="SMR" id="D5DEH5"/>
<dbReference type="MEROPS" id="M04.001"/>
<dbReference type="KEGG" id="bmd:BMD_2285"/>
<dbReference type="HOGENOM" id="CLU_008590_5_2_9"/>
<dbReference type="Proteomes" id="UP000002365">
    <property type="component" value="Chromosome"/>
</dbReference>
<dbReference type="GO" id="GO:0005576">
    <property type="term" value="C:extracellular region"/>
    <property type="evidence" value="ECO:0007669"/>
    <property type="project" value="UniProtKB-SubCell"/>
</dbReference>
<dbReference type="GO" id="GO:0046872">
    <property type="term" value="F:metal ion binding"/>
    <property type="evidence" value="ECO:0007669"/>
    <property type="project" value="UniProtKB-KW"/>
</dbReference>
<dbReference type="GO" id="GO:0004222">
    <property type="term" value="F:metalloendopeptidase activity"/>
    <property type="evidence" value="ECO:0007669"/>
    <property type="project" value="InterPro"/>
</dbReference>
<dbReference type="GO" id="GO:0006508">
    <property type="term" value="P:proteolysis"/>
    <property type="evidence" value="ECO:0007669"/>
    <property type="project" value="UniProtKB-KW"/>
</dbReference>
<dbReference type="CDD" id="cd09597">
    <property type="entry name" value="M4_TLP"/>
    <property type="match status" value="1"/>
</dbReference>
<dbReference type="FunFam" id="3.10.170.10:FF:000001">
    <property type="entry name" value="Peptidase M4"/>
    <property type="match status" value="1"/>
</dbReference>
<dbReference type="FunFam" id="1.10.390.10:FF:000012">
    <property type="entry name" value="Thermolysin"/>
    <property type="match status" value="1"/>
</dbReference>
<dbReference type="Gene3D" id="3.10.170.10">
    <property type="match status" value="1"/>
</dbReference>
<dbReference type="Gene3D" id="3.10.450.40">
    <property type="match status" value="1"/>
</dbReference>
<dbReference type="Gene3D" id="3.10.450.490">
    <property type="match status" value="1"/>
</dbReference>
<dbReference type="Gene3D" id="1.10.390.10">
    <property type="entry name" value="Neutral Protease Domain 2"/>
    <property type="match status" value="1"/>
</dbReference>
<dbReference type="InterPro" id="IPR011096">
    <property type="entry name" value="FTP_domain"/>
</dbReference>
<dbReference type="InterPro" id="IPR025711">
    <property type="entry name" value="PepSY"/>
</dbReference>
<dbReference type="InterPro" id="IPR023612">
    <property type="entry name" value="Peptidase_M4"/>
</dbReference>
<dbReference type="InterPro" id="IPR027268">
    <property type="entry name" value="Peptidase_M4/M1_CTD_sf"/>
</dbReference>
<dbReference type="InterPro" id="IPR001570">
    <property type="entry name" value="Peptidase_M4_C_domain"/>
</dbReference>
<dbReference type="InterPro" id="IPR013856">
    <property type="entry name" value="Peptidase_M4_domain"/>
</dbReference>
<dbReference type="InterPro" id="IPR050728">
    <property type="entry name" value="Zinc_Metalloprotease_M4"/>
</dbReference>
<dbReference type="PANTHER" id="PTHR33794">
    <property type="entry name" value="BACILLOLYSIN"/>
    <property type="match status" value="1"/>
</dbReference>
<dbReference type="PANTHER" id="PTHR33794:SF3">
    <property type="entry name" value="NEUTRAL PROTEASE B"/>
    <property type="match status" value="1"/>
</dbReference>
<dbReference type="Pfam" id="PF07504">
    <property type="entry name" value="FTP"/>
    <property type="match status" value="1"/>
</dbReference>
<dbReference type="Pfam" id="PF03413">
    <property type="entry name" value="PepSY"/>
    <property type="match status" value="1"/>
</dbReference>
<dbReference type="Pfam" id="PF01447">
    <property type="entry name" value="Peptidase_M4"/>
    <property type="match status" value="1"/>
</dbReference>
<dbReference type="Pfam" id="PF02868">
    <property type="entry name" value="Peptidase_M4_C"/>
    <property type="match status" value="1"/>
</dbReference>
<dbReference type="PRINTS" id="PR00730">
    <property type="entry name" value="THERMOLYSIN"/>
</dbReference>
<dbReference type="SUPFAM" id="SSF55486">
    <property type="entry name" value="Metalloproteases ('zincins'), catalytic domain"/>
    <property type="match status" value="1"/>
</dbReference>
<dbReference type="PROSITE" id="PS00142">
    <property type="entry name" value="ZINC_PROTEASE"/>
    <property type="match status" value="1"/>
</dbReference>
<keyword id="KW-0106">Calcium</keyword>
<keyword id="KW-0378">Hydrolase</keyword>
<keyword id="KW-0479">Metal-binding</keyword>
<keyword id="KW-0482">Metalloprotease</keyword>
<keyword id="KW-0645">Protease</keyword>
<keyword id="KW-0964">Secreted</keyword>
<keyword id="KW-0732">Signal</keyword>
<keyword id="KW-0862">Zinc</keyword>
<keyword id="KW-0865">Zymogen</keyword>
<feature type="signal peptide" evidence="3">
    <location>
        <begin position="1"/>
        <end position="24"/>
    </location>
</feature>
<feature type="propeptide" id="PRO_0000396525" description="Activation peptide" evidence="3">
    <location>
        <begin position="25"/>
        <end position="245"/>
    </location>
</feature>
<feature type="chain" id="PRO_0000396526" description="Bacillolysin">
    <location>
        <begin position="246"/>
        <end position="562"/>
    </location>
</feature>
<feature type="active site" evidence="2">
    <location>
        <position position="389"/>
    </location>
</feature>
<feature type="active site" description="Proton donor" evidence="2">
    <location>
        <position position="477"/>
    </location>
</feature>
<feature type="binding site" evidence="2">
    <location>
        <position position="303"/>
    </location>
    <ligand>
        <name>Ca(2+)</name>
        <dbReference type="ChEBI" id="CHEBI:29108"/>
        <label>1</label>
    </ligand>
</feature>
<feature type="binding site" evidence="2">
    <location>
        <position position="305"/>
    </location>
    <ligand>
        <name>Ca(2+)</name>
        <dbReference type="ChEBI" id="CHEBI:29108"/>
        <label>1</label>
    </ligand>
</feature>
<feature type="binding site" evidence="2">
    <location>
        <position position="384"/>
    </location>
    <ligand>
        <name>Ca(2+)</name>
        <dbReference type="ChEBI" id="CHEBI:29108"/>
        <label>2</label>
    </ligand>
</feature>
<feature type="binding site" evidence="2">
    <location>
        <position position="388"/>
    </location>
    <ligand>
        <name>Zn(2+)</name>
        <dbReference type="ChEBI" id="CHEBI:29105"/>
        <note>catalytic</note>
    </ligand>
</feature>
<feature type="binding site" evidence="2">
    <location>
        <position position="392"/>
    </location>
    <ligand>
        <name>Zn(2+)</name>
        <dbReference type="ChEBI" id="CHEBI:29105"/>
        <note>catalytic</note>
    </ligand>
</feature>
<feature type="binding site" evidence="2">
    <location>
        <position position="412"/>
    </location>
    <ligand>
        <name>Zn(2+)</name>
        <dbReference type="ChEBI" id="CHEBI:29105"/>
        <note>catalytic</note>
    </ligand>
</feature>
<feature type="binding site" evidence="2">
    <location>
        <position position="423"/>
    </location>
    <ligand>
        <name>Ca(2+)</name>
        <dbReference type="ChEBI" id="CHEBI:29108"/>
        <label>2</label>
    </ligand>
</feature>
<feature type="binding site" evidence="2">
    <location>
        <position position="423"/>
    </location>
    <ligand>
        <name>Ca(2+)</name>
        <dbReference type="ChEBI" id="CHEBI:29108"/>
        <label>3</label>
    </ligand>
</feature>
<feature type="binding site" evidence="2">
    <location>
        <position position="429"/>
    </location>
    <ligand>
        <name>Ca(2+)</name>
        <dbReference type="ChEBI" id="CHEBI:29108"/>
        <label>3</label>
    </ligand>
</feature>
<feature type="binding site" evidence="2">
    <location>
        <position position="431"/>
    </location>
    <ligand>
        <name>Ca(2+)</name>
        <dbReference type="ChEBI" id="CHEBI:29108"/>
        <label>2</label>
    </ligand>
</feature>
<feature type="binding site" evidence="2">
    <location>
        <position position="431"/>
    </location>
    <ligand>
        <name>Ca(2+)</name>
        <dbReference type="ChEBI" id="CHEBI:29108"/>
        <label>3</label>
    </ligand>
</feature>
<feature type="binding site" evidence="2">
    <location>
        <position position="433"/>
    </location>
    <ligand>
        <name>Ca(2+)</name>
        <dbReference type="ChEBI" id="CHEBI:29108"/>
        <label>2</label>
    </ligand>
</feature>
<feature type="binding site" evidence="2">
    <location>
        <position position="436"/>
    </location>
    <ligand>
        <name>Ca(2+)</name>
        <dbReference type="ChEBI" id="CHEBI:29108"/>
        <label>2</label>
    </ligand>
</feature>
<feature type="binding site" evidence="2">
    <location>
        <position position="436"/>
    </location>
    <ligand>
        <name>Ca(2+)</name>
        <dbReference type="ChEBI" id="CHEBI:29108"/>
        <label>3</label>
    </ligand>
</feature>
<feature type="binding site" evidence="2">
    <location>
        <position position="439"/>
    </location>
    <ligand>
        <name>Ca(2+)</name>
        <dbReference type="ChEBI" id="CHEBI:29108"/>
        <label>4</label>
    </ligand>
</feature>
<feature type="binding site" evidence="2">
    <location>
        <position position="440"/>
    </location>
    <ligand>
        <name>Ca(2+)</name>
        <dbReference type="ChEBI" id="CHEBI:29108"/>
        <label>4</label>
    </ligand>
</feature>
<feature type="binding site" evidence="2">
    <location>
        <position position="446"/>
    </location>
    <ligand>
        <name>Ca(2+)</name>
        <dbReference type="ChEBI" id="CHEBI:29108"/>
        <label>4</label>
    </ligand>
</feature>
<reference key="1">
    <citation type="journal article" date="1994" name="Appl. Microbiol. Biotechnol.">
        <title>Cloning and sequencing of the leu C and npr M genes and a putative spo IV gene from Bacillus megaterium DSM319.</title>
        <authorList>
            <person name="Meinhardt F."/>
            <person name="Busskamp M."/>
            <person name="Wittchen K.D."/>
        </authorList>
    </citation>
    <scope>NUCLEOTIDE SEQUENCE [GENOMIC DNA]</scope>
</reference>
<reference key="2">
    <citation type="journal article" date="2011" name="J. Bacteriol.">
        <title>Genome sequences of the biotechnologically important Bacillus megaterium strains QM B1551 and DSM319.</title>
        <authorList>
            <person name="Eppinger M."/>
            <person name="Bunk B."/>
            <person name="Johns M.A."/>
            <person name="Edirisinghe J.N."/>
            <person name="Kutumbaka K.K."/>
            <person name="Koenig S.S."/>
            <person name="Creasy H.H."/>
            <person name="Rosovitz M.J."/>
            <person name="Riley D.R."/>
            <person name="Daugherty S."/>
            <person name="Martin M."/>
            <person name="Elbourne L.D."/>
            <person name="Paulsen I."/>
            <person name="Biedendieck R."/>
            <person name="Braun C."/>
            <person name="Grayburn S."/>
            <person name="Dhingra S."/>
            <person name="Lukyanchuk V."/>
            <person name="Ball B."/>
            <person name="Ul-Qamar R."/>
            <person name="Seibel J."/>
            <person name="Bremer E."/>
            <person name="Jahn D."/>
            <person name="Ravel J."/>
            <person name="Vary P.S."/>
        </authorList>
    </citation>
    <scope>NUCLEOTIDE SEQUENCE [LARGE SCALE GENOMIC DNA]</scope>
    <source>
        <strain>DSM 319 / IMG 1521</strain>
    </source>
</reference>
<accession>D5DEH5</accession>
<accession>Q00891</accession>
<sequence length="562" mass="60862">MKKKKQALKVLLSVGILSSSFAFAHTSSAAPNNVLSTEKYNKEIKSPEFISGKLSGPSSQKAQDVVFHYMNTNKDKYKLGNENAQNSFKVTEVVKDPVEQATVVRLQQVYNNIPVWGSTQLAHVAKDGTLKVVSGTVAPDLDKKEKLKGQKQVDSKKAIQAAEKDLGFKPTYEKSPSSELYVYQNGSDTTYAYVVNLNFLSPEPGNYYYFVDAISGKVLDKYNTIDSVAGPKADVKQAAKPAAKPVTGTNAIGSGKGVLGDTKSLKTTLSSSTYYLQDNTRGATIYTYDAKNRTSLPGTLWTDTDNTYNATRDAAAVDAHYYAGVTYDYYKNKFNRNSYDNAGAPLKSTVHYSSGYNNAFWNGSQMVYGDGDGTTFVPLSGGLDVIGHELTHAVTERSSNLIYQYESGALNEAISDIFGTLVEYYDNRNPDWEIGEDIYTPGTSGDALRSMSNPAKYGDPDHYSKRYTGSSDNGGVHTNSGIINKAAYLLANGGTHYGVTVTGIGGDKLGKIYYRANTLYFTQSTTFSQARAGLVQAAADLYGSGSQEVISVGKSFDAVGVQ</sequence>
<protein>
    <recommendedName>
        <fullName>Bacillolysin</fullName>
        <ecNumber>3.4.24.28</ecNumber>
    </recommendedName>
    <alternativeName>
        <fullName>Neutral protease</fullName>
    </alternativeName>
</protein>
<name>NPRM_PRIM3</name>
<gene>
    <name type="primary">nprM</name>
    <name type="ordered locus">BMD_2285</name>
</gene>
<organism>
    <name type="scientific">Priestia megaterium (strain DSM 319 / IMG 1521)</name>
    <name type="common">Bacillus megaterium</name>
    <dbReference type="NCBI Taxonomy" id="592022"/>
    <lineage>
        <taxon>Bacteria</taxon>
        <taxon>Bacillati</taxon>
        <taxon>Bacillota</taxon>
        <taxon>Bacilli</taxon>
        <taxon>Bacillales</taxon>
        <taxon>Bacillaceae</taxon>
        <taxon>Priestia</taxon>
    </lineage>
</organism>
<proteinExistence type="inferred from homology"/>
<comment type="function">
    <text evidence="1">Extracellular zinc metalloprotease.</text>
</comment>
<comment type="catalytic activity">
    <reaction>
        <text>Similar, but not identical, to that of thermolysin.</text>
        <dbReference type="EC" id="3.4.24.28"/>
    </reaction>
</comment>
<comment type="cofactor">
    <cofactor evidence="1">
        <name>Ca(2+)</name>
        <dbReference type="ChEBI" id="CHEBI:29108"/>
    </cofactor>
    <text evidence="1">Binds 4 Ca(2+) ions per subunit.</text>
</comment>
<comment type="cofactor">
    <cofactor evidence="1">
        <name>Zn(2+)</name>
        <dbReference type="ChEBI" id="CHEBI:29105"/>
    </cofactor>
    <text evidence="1">Binds 1 zinc ion per subunit.</text>
</comment>
<comment type="subcellular location">
    <subcellularLocation>
        <location evidence="1">Secreted</location>
    </subcellularLocation>
</comment>
<comment type="similarity">
    <text evidence="4">Belongs to the peptidase M4 family.</text>
</comment>
<evidence type="ECO:0000250" key="1"/>
<evidence type="ECO:0000250" key="2">
    <source>
        <dbReference type="UniProtKB" id="P05806"/>
    </source>
</evidence>
<evidence type="ECO:0000255" key="3"/>
<evidence type="ECO:0000305" key="4"/>